<proteinExistence type="inferred from homology"/>
<protein>
    <recommendedName>
        <fullName evidence="1">Uracil phosphoribosyltransferase</fullName>
        <ecNumber evidence="1">2.4.2.9</ecNumber>
    </recommendedName>
    <alternativeName>
        <fullName evidence="1">UMP pyrophosphorylase</fullName>
    </alternativeName>
    <alternativeName>
        <fullName evidence="1">UPRTase</fullName>
    </alternativeName>
</protein>
<evidence type="ECO:0000255" key="1">
    <source>
        <dbReference type="HAMAP-Rule" id="MF_01218"/>
    </source>
</evidence>
<feature type="chain" id="PRO_1000053703" description="Uracil phosphoribosyltransferase">
    <location>
        <begin position="1"/>
        <end position="209"/>
    </location>
</feature>
<feature type="binding site" evidence="1">
    <location>
        <position position="79"/>
    </location>
    <ligand>
        <name>5-phospho-alpha-D-ribose 1-diphosphate</name>
        <dbReference type="ChEBI" id="CHEBI:58017"/>
    </ligand>
</feature>
<feature type="binding site" evidence="1">
    <location>
        <position position="104"/>
    </location>
    <ligand>
        <name>5-phospho-alpha-D-ribose 1-diphosphate</name>
        <dbReference type="ChEBI" id="CHEBI:58017"/>
    </ligand>
</feature>
<feature type="binding site" evidence="1">
    <location>
        <begin position="131"/>
        <end position="139"/>
    </location>
    <ligand>
        <name>5-phospho-alpha-D-ribose 1-diphosphate</name>
        <dbReference type="ChEBI" id="CHEBI:58017"/>
    </ligand>
</feature>
<feature type="binding site" evidence="1">
    <location>
        <position position="194"/>
    </location>
    <ligand>
        <name>uracil</name>
        <dbReference type="ChEBI" id="CHEBI:17568"/>
    </ligand>
</feature>
<feature type="binding site" evidence="1">
    <location>
        <begin position="199"/>
        <end position="201"/>
    </location>
    <ligand>
        <name>uracil</name>
        <dbReference type="ChEBI" id="CHEBI:17568"/>
    </ligand>
</feature>
<feature type="binding site" evidence="1">
    <location>
        <position position="200"/>
    </location>
    <ligand>
        <name>5-phospho-alpha-D-ribose 1-diphosphate</name>
        <dbReference type="ChEBI" id="CHEBI:58017"/>
    </ligand>
</feature>
<gene>
    <name evidence="1" type="primary">upp</name>
    <name type="ordered locus">CBO0145</name>
    <name type="ordered locus">CLC_0193</name>
</gene>
<accession>A5HY41</accession>
<accession>A7G061</accession>
<keyword id="KW-0021">Allosteric enzyme</keyword>
<keyword id="KW-0328">Glycosyltransferase</keyword>
<keyword id="KW-0342">GTP-binding</keyword>
<keyword id="KW-0460">Magnesium</keyword>
<keyword id="KW-0547">Nucleotide-binding</keyword>
<keyword id="KW-1185">Reference proteome</keyword>
<keyword id="KW-0808">Transferase</keyword>
<reference key="1">
    <citation type="journal article" date="2007" name="Genome Res.">
        <title>Genome sequence of a proteolytic (Group I) Clostridium botulinum strain Hall A and comparative analysis of the clostridial genomes.</title>
        <authorList>
            <person name="Sebaihia M."/>
            <person name="Peck M.W."/>
            <person name="Minton N.P."/>
            <person name="Thomson N.R."/>
            <person name="Holden M.T.G."/>
            <person name="Mitchell W.J."/>
            <person name="Carter A.T."/>
            <person name="Bentley S.D."/>
            <person name="Mason D.R."/>
            <person name="Crossman L."/>
            <person name="Paul C.J."/>
            <person name="Ivens A."/>
            <person name="Wells-Bennik M.H.J."/>
            <person name="Davis I.J."/>
            <person name="Cerdeno-Tarraga A.M."/>
            <person name="Churcher C."/>
            <person name="Quail M.A."/>
            <person name="Chillingworth T."/>
            <person name="Feltwell T."/>
            <person name="Fraser A."/>
            <person name="Goodhead I."/>
            <person name="Hance Z."/>
            <person name="Jagels K."/>
            <person name="Larke N."/>
            <person name="Maddison M."/>
            <person name="Moule S."/>
            <person name="Mungall K."/>
            <person name="Norbertczak H."/>
            <person name="Rabbinowitsch E."/>
            <person name="Sanders M."/>
            <person name="Simmonds M."/>
            <person name="White B."/>
            <person name="Whithead S."/>
            <person name="Parkhill J."/>
        </authorList>
    </citation>
    <scope>NUCLEOTIDE SEQUENCE [LARGE SCALE GENOMIC DNA]</scope>
    <source>
        <strain>Hall / ATCC 3502 / NCTC 13319 / Type A</strain>
    </source>
</reference>
<reference key="2">
    <citation type="journal article" date="2007" name="PLoS ONE">
        <title>Analysis of the neurotoxin complex genes in Clostridium botulinum A1-A4 and B1 strains: BoNT/A3, /Ba4 and /B1 clusters are located within plasmids.</title>
        <authorList>
            <person name="Smith T.J."/>
            <person name="Hill K.K."/>
            <person name="Foley B.T."/>
            <person name="Detter J.C."/>
            <person name="Munk A.C."/>
            <person name="Bruce D.C."/>
            <person name="Doggett N.A."/>
            <person name="Smith L.A."/>
            <person name="Marks J.D."/>
            <person name="Xie G."/>
            <person name="Brettin T.S."/>
        </authorList>
    </citation>
    <scope>NUCLEOTIDE SEQUENCE [LARGE SCALE GENOMIC DNA]</scope>
    <source>
        <strain>Hall / ATCC 3502 / NCTC 13319 / Type A</strain>
    </source>
</reference>
<sequence length="209" mass="22869">MSKVTQIAHPLILHKLALIRDKNTGSKDFRELVEEVAMLMAYEVTRDLQLKEVEIETPICKTKCKMLSGKKVAIVPILRAGLGMVGGMTSLIPAAKVGHIGLYRDEETLKPVEYFCKLPQDIGDRDVIVTDPMLATGGSAKDAITLLKQKGAKHIRLMCLVAAPEGIKEVMDEHPDVDIYVASVDEKLNEKGYVVPGLGDAGDRLYGTK</sequence>
<name>UPP_CLOBH</name>
<dbReference type="EC" id="2.4.2.9" evidence="1"/>
<dbReference type="EMBL" id="CP000727">
    <property type="protein sequence ID" value="ABS36135.1"/>
    <property type="molecule type" value="Genomic_DNA"/>
</dbReference>
<dbReference type="EMBL" id="AM412317">
    <property type="protein sequence ID" value="CAL81700.1"/>
    <property type="molecule type" value="Genomic_DNA"/>
</dbReference>
<dbReference type="RefSeq" id="WP_003360558.1">
    <property type="nucleotide sequence ID" value="NC_009698.1"/>
</dbReference>
<dbReference type="RefSeq" id="YP_001252692.1">
    <property type="nucleotide sequence ID" value="NC_009495.1"/>
</dbReference>
<dbReference type="RefSeq" id="YP_001386104.1">
    <property type="nucleotide sequence ID" value="NC_009698.1"/>
</dbReference>
<dbReference type="SMR" id="A5HY41"/>
<dbReference type="GeneID" id="5184400"/>
<dbReference type="KEGG" id="cbh:CLC_0193"/>
<dbReference type="KEGG" id="cbo:CBO0145"/>
<dbReference type="PATRIC" id="fig|413999.7.peg.144"/>
<dbReference type="HOGENOM" id="CLU_067096_2_2_9"/>
<dbReference type="UniPathway" id="UPA00574">
    <property type="reaction ID" value="UER00636"/>
</dbReference>
<dbReference type="PRO" id="PR:A5HY41"/>
<dbReference type="Proteomes" id="UP000001986">
    <property type="component" value="Chromosome"/>
</dbReference>
<dbReference type="GO" id="GO:0005737">
    <property type="term" value="C:cytoplasm"/>
    <property type="evidence" value="ECO:0000318"/>
    <property type="project" value="GO_Central"/>
</dbReference>
<dbReference type="GO" id="GO:0005525">
    <property type="term" value="F:GTP binding"/>
    <property type="evidence" value="ECO:0007669"/>
    <property type="project" value="UniProtKB-KW"/>
</dbReference>
<dbReference type="GO" id="GO:0000287">
    <property type="term" value="F:magnesium ion binding"/>
    <property type="evidence" value="ECO:0007669"/>
    <property type="project" value="UniProtKB-UniRule"/>
</dbReference>
<dbReference type="GO" id="GO:0004845">
    <property type="term" value="F:uracil phosphoribosyltransferase activity"/>
    <property type="evidence" value="ECO:0000318"/>
    <property type="project" value="GO_Central"/>
</dbReference>
<dbReference type="GO" id="GO:0044206">
    <property type="term" value="P:UMP salvage"/>
    <property type="evidence" value="ECO:0007669"/>
    <property type="project" value="UniProtKB-UniRule"/>
</dbReference>
<dbReference type="GO" id="GO:0006223">
    <property type="term" value="P:uracil salvage"/>
    <property type="evidence" value="ECO:0007669"/>
    <property type="project" value="InterPro"/>
</dbReference>
<dbReference type="CDD" id="cd06223">
    <property type="entry name" value="PRTases_typeI"/>
    <property type="match status" value="1"/>
</dbReference>
<dbReference type="FunFam" id="3.40.50.2020:FF:000003">
    <property type="entry name" value="Uracil phosphoribosyltransferase"/>
    <property type="match status" value="1"/>
</dbReference>
<dbReference type="Gene3D" id="3.40.50.2020">
    <property type="match status" value="1"/>
</dbReference>
<dbReference type="HAMAP" id="MF_01218_B">
    <property type="entry name" value="Upp_B"/>
    <property type="match status" value="1"/>
</dbReference>
<dbReference type="InterPro" id="IPR000836">
    <property type="entry name" value="PRibTrfase_dom"/>
</dbReference>
<dbReference type="InterPro" id="IPR029057">
    <property type="entry name" value="PRTase-like"/>
</dbReference>
<dbReference type="InterPro" id="IPR034332">
    <property type="entry name" value="Upp_B"/>
</dbReference>
<dbReference type="InterPro" id="IPR050054">
    <property type="entry name" value="UPRTase/APRTase"/>
</dbReference>
<dbReference type="InterPro" id="IPR005765">
    <property type="entry name" value="Ura_phspho_trans"/>
</dbReference>
<dbReference type="NCBIfam" id="NF001097">
    <property type="entry name" value="PRK00129.1"/>
    <property type="match status" value="1"/>
</dbReference>
<dbReference type="NCBIfam" id="TIGR01091">
    <property type="entry name" value="upp"/>
    <property type="match status" value="1"/>
</dbReference>
<dbReference type="PANTHER" id="PTHR32315">
    <property type="entry name" value="ADENINE PHOSPHORIBOSYLTRANSFERASE"/>
    <property type="match status" value="1"/>
</dbReference>
<dbReference type="PANTHER" id="PTHR32315:SF4">
    <property type="entry name" value="URACIL PHOSPHORIBOSYLTRANSFERASE, CHLOROPLASTIC"/>
    <property type="match status" value="1"/>
</dbReference>
<dbReference type="Pfam" id="PF14681">
    <property type="entry name" value="UPRTase"/>
    <property type="match status" value="1"/>
</dbReference>
<dbReference type="SUPFAM" id="SSF53271">
    <property type="entry name" value="PRTase-like"/>
    <property type="match status" value="1"/>
</dbReference>
<organism>
    <name type="scientific">Clostridium botulinum (strain Hall / ATCC 3502 / NCTC 13319 / Type A)</name>
    <dbReference type="NCBI Taxonomy" id="441771"/>
    <lineage>
        <taxon>Bacteria</taxon>
        <taxon>Bacillati</taxon>
        <taxon>Bacillota</taxon>
        <taxon>Clostridia</taxon>
        <taxon>Eubacteriales</taxon>
        <taxon>Clostridiaceae</taxon>
        <taxon>Clostridium</taxon>
    </lineage>
</organism>
<comment type="function">
    <text evidence="1">Catalyzes the conversion of uracil and 5-phospho-alpha-D-ribose 1-diphosphate (PRPP) to UMP and diphosphate.</text>
</comment>
<comment type="catalytic activity">
    <reaction evidence="1">
        <text>UMP + diphosphate = 5-phospho-alpha-D-ribose 1-diphosphate + uracil</text>
        <dbReference type="Rhea" id="RHEA:13017"/>
        <dbReference type="ChEBI" id="CHEBI:17568"/>
        <dbReference type="ChEBI" id="CHEBI:33019"/>
        <dbReference type="ChEBI" id="CHEBI:57865"/>
        <dbReference type="ChEBI" id="CHEBI:58017"/>
        <dbReference type="EC" id="2.4.2.9"/>
    </reaction>
</comment>
<comment type="cofactor">
    <cofactor evidence="1">
        <name>Mg(2+)</name>
        <dbReference type="ChEBI" id="CHEBI:18420"/>
    </cofactor>
    <text evidence="1">Binds 1 Mg(2+) ion per subunit. The magnesium is bound as Mg-PRPP.</text>
</comment>
<comment type="activity regulation">
    <text evidence="1">Allosterically activated by GTP.</text>
</comment>
<comment type="pathway">
    <text evidence="1">Pyrimidine metabolism; UMP biosynthesis via salvage pathway; UMP from uracil: step 1/1.</text>
</comment>
<comment type="similarity">
    <text evidence="1">Belongs to the UPRTase family.</text>
</comment>